<feature type="chain" id="PRO_0000155887" description="Ribonuclease Z">
    <location>
        <begin position="1"/>
        <end position="319"/>
    </location>
</feature>
<feature type="active site" description="Proton acceptor" evidence="1">
    <location>
        <position position="66"/>
    </location>
</feature>
<feature type="binding site" evidence="1">
    <location>
        <position position="62"/>
    </location>
    <ligand>
        <name>Zn(2+)</name>
        <dbReference type="ChEBI" id="CHEBI:29105"/>
        <label>1</label>
        <note>catalytic</note>
    </ligand>
</feature>
<feature type="binding site" evidence="1">
    <location>
        <position position="64"/>
    </location>
    <ligand>
        <name>Zn(2+)</name>
        <dbReference type="ChEBI" id="CHEBI:29105"/>
        <label>1</label>
        <note>catalytic</note>
    </ligand>
</feature>
<feature type="binding site" evidence="1">
    <location>
        <position position="66"/>
    </location>
    <ligand>
        <name>Zn(2+)</name>
        <dbReference type="ChEBI" id="CHEBI:29105"/>
        <label>2</label>
        <note>catalytic</note>
    </ligand>
</feature>
<feature type="binding site" evidence="1">
    <location>
        <position position="67"/>
    </location>
    <ligand>
        <name>Zn(2+)</name>
        <dbReference type="ChEBI" id="CHEBI:29105"/>
        <label>2</label>
        <note>catalytic</note>
    </ligand>
</feature>
<feature type="binding site" evidence="1">
    <location>
        <position position="139"/>
    </location>
    <ligand>
        <name>Zn(2+)</name>
        <dbReference type="ChEBI" id="CHEBI:29105"/>
        <label>1</label>
        <note>catalytic</note>
    </ligand>
</feature>
<feature type="binding site" evidence="1">
    <location>
        <position position="209"/>
    </location>
    <ligand>
        <name>Zn(2+)</name>
        <dbReference type="ChEBI" id="CHEBI:29105"/>
        <label>1</label>
        <note>catalytic</note>
    </ligand>
</feature>
<feature type="binding site" evidence="1">
    <location>
        <position position="209"/>
    </location>
    <ligand>
        <name>Zn(2+)</name>
        <dbReference type="ChEBI" id="CHEBI:29105"/>
        <label>2</label>
        <note>catalytic</note>
    </ligand>
</feature>
<feature type="binding site" evidence="1">
    <location>
        <position position="268"/>
    </location>
    <ligand>
        <name>Zn(2+)</name>
        <dbReference type="ChEBI" id="CHEBI:29105"/>
        <label>2</label>
        <note>catalytic</note>
    </ligand>
</feature>
<comment type="function">
    <text evidence="1">Zinc phosphodiesterase, which displays some tRNA 3'-processing endonuclease activity. Probably involved in tRNA maturation, by removing a 3'-trailer from precursor tRNA.</text>
</comment>
<comment type="catalytic activity">
    <reaction evidence="1">
        <text>Endonucleolytic cleavage of RNA, removing extra 3' nucleotides from tRNA precursor, generating 3' termini of tRNAs. A 3'-hydroxy group is left at the tRNA terminus and a 5'-phosphoryl group is left at the trailer molecule.</text>
        <dbReference type="EC" id="3.1.26.11"/>
    </reaction>
</comment>
<comment type="cofactor">
    <cofactor evidence="1">
        <name>Zn(2+)</name>
        <dbReference type="ChEBI" id="CHEBI:29105"/>
    </cofactor>
    <text evidence="1">Binds 2 Zn(2+) ions.</text>
</comment>
<comment type="subunit">
    <text evidence="1">Homodimer.</text>
</comment>
<comment type="similarity">
    <text evidence="1">Belongs to the RNase Z family.</text>
</comment>
<reference key="1">
    <citation type="journal article" date="2002" name="Environ. Microbiol.">
        <title>Complete genome sequence and comparative analysis of the metabolically versatile Pseudomonas putida KT2440.</title>
        <authorList>
            <person name="Nelson K.E."/>
            <person name="Weinel C."/>
            <person name="Paulsen I.T."/>
            <person name="Dodson R.J."/>
            <person name="Hilbert H."/>
            <person name="Martins dos Santos V.A.P."/>
            <person name="Fouts D.E."/>
            <person name="Gill S.R."/>
            <person name="Pop M."/>
            <person name="Holmes M."/>
            <person name="Brinkac L.M."/>
            <person name="Beanan M.J."/>
            <person name="DeBoy R.T."/>
            <person name="Daugherty S.C."/>
            <person name="Kolonay J.F."/>
            <person name="Madupu R."/>
            <person name="Nelson W.C."/>
            <person name="White O."/>
            <person name="Peterson J.D."/>
            <person name="Khouri H.M."/>
            <person name="Hance I."/>
            <person name="Chris Lee P."/>
            <person name="Holtzapple E.K."/>
            <person name="Scanlan D."/>
            <person name="Tran K."/>
            <person name="Moazzez A."/>
            <person name="Utterback T.R."/>
            <person name="Rizzo M."/>
            <person name="Lee K."/>
            <person name="Kosack D."/>
            <person name="Moestl D."/>
            <person name="Wedler H."/>
            <person name="Lauber J."/>
            <person name="Stjepandic D."/>
            <person name="Hoheisel J."/>
            <person name="Straetz M."/>
            <person name="Heim S."/>
            <person name="Kiewitz C."/>
            <person name="Eisen J.A."/>
            <person name="Timmis K.N."/>
            <person name="Duesterhoeft A."/>
            <person name="Tuemmler B."/>
            <person name="Fraser C.M."/>
        </authorList>
    </citation>
    <scope>NUCLEOTIDE SEQUENCE [LARGE SCALE GENOMIC DNA]</scope>
    <source>
        <strain>ATCC 47054 / DSM 6125 / CFBP 8728 / NCIMB 11950 / KT2440</strain>
    </source>
</reference>
<sequence length="319" mass="34917">MDLLFLGTSAGVPTKARNVSATAVIEASGSHWYLVDCGEGTQHRLLHTPLSIRDLRAIFITHVHGDHCFGLPGLLASAGMSGRTQPLEVILPAVLHDWVRQGLVASDTFLPFELRLLPVEELIAWRSETLQVTTVQLSHRVPSVGFVFTEINPEPRLDIQRLDAEGITRGPLWGELAKGLTVTYDGQLLNGNDYLRPSRPPRRVIVCGDNDKPELLAAVARGADVLVHEATFTQAVVERTGGTFGHSTAAEVARFAEAAGVRNLVLTHFSARYQNDPRRSPHIDNVRDEALAHYSGQLTLAQDLQRYHLGRNGLLEASA</sequence>
<protein>
    <recommendedName>
        <fullName evidence="1">Ribonuclease Z</fullName>
        <shortName evidence="1">RNase Z</shortName>
        <ecNumber evidence="1">3.1.26.11</ecNumber>
    </recommendedName>
    <alternativeName>
        <fullName evidence="1">tRNA 3 endonuclease</fullName>
    </alternativeName>
    <alternativeName>
        <fullName evidence="1">tRNase Z</fullName>
    </alternativeName>
</protein>
<proteinExistence type="inferred from homology"/>
<gene>
    <name evidence="1" type="primary">rnz</name>
    <name type="ordered locus">PP_4033</name>
</gene>
<organism>
    <name type="scientific">Pseudomonas putida (strain ATCC 47054 / DSM 6125 / CFBP 8728 / NCIMB 11950 / KT2440)</name>
    <dbReference type="NCBI Taxonomy" id="160488"/>
    <lineage>
        <taxon>Bacteria</taxon>
        <taxon>Pseudomonadati</taxon>
        <taxon>Pseudomonadota</taxon>
        <taxon>Gammaproteobacteria</taxon>
        <taxon>Pseudomonadales</taxon>
        <taxon>Pseudomonadaceae</taxon>
        <taxon>Pseudomonas</taxon>
    </lineage>
</organism>
<evidence type="ECO:0000255" key="1">
    <source>
        <dbReference type="HAMAP-Rule" id="MF_01818"/>
    </source>
</evidence>
<accession>Q88FQ4</accession>
<dbReference type="EC" id="3.1.26.11" evidence="1"/>
<dbReference type="EMBL" id="AE015451">
    <property type="protein sequence ID" value="AAN69625.1"/>
    <property type="molecule type" value="Genomic_DNA"/>
</dbReference>
<dbReference type="RefSeq" id="NP_746161.1">
    <property type="nucleotide sequence ID" value="NC_002947.4"/>
</dbReference>
<dbReference type="RefSeq" id="WP_010954831.1">
    <property type="nucleotide sequence ID" value="NZ_CP169744.1"/>
</dbReference>
<dbReference type="SMR" id="Q88FQ4"/>
<dbReference type="STRING" id="160488.PP_4033"/>
<dbReference type="PaxDb" id="160488-PP_4033"/>
<dbReference type="KEGG" id="ppu:PP_4033"/>
<dbReference type="PATRIC" id="fig|160488.4.peg.4286"/>
<dbReference type="eggNOG" id="COG1234">
    <property type="taxonomic scope" value="Bacteria"/>
</dbReference>
<dbReference type="HOGENOM" id="CLU_031317_2_0_6"/>
<dbReference type="OrthoDB" id="9803916at2"/>
<dbReference type="PhylomeDB" id="Q88FQ4"/>
<dbReference type="BioCyc" id="PPUT160488:G1G01-4298-MONOMER"/>
<dbReference type="Proteomes" id="UP000000556">
    <property type="component" value="Chromosome"/>
</dbReference>
<dbReference type="GO" id="GO:0042781">
    <property type="term" value="F:3'-tRNA processing endoribonuclease activity"/>
    <property type="evidence" value="ECO:0007669"/>
    <property type="project" value="UniProtKB-UniRule"/>
</dbReference>
<dbReference type="GO" id="GO:0008270">
    <property type="term" value="F:zinc ion binding"/>
    <property type="evidence" value="ECO:0007669"/>
    <property type="project" value="UniProtKB-UniRule"/>
</dbReference>
<dbReference type="CDD" id="cd07717">
    <property type="entry name" value="RNaseZ_ZiPD-like_MBL-fold"/>
    <property type="match status" value="1"/>
</dbReference>
<dbReference type="Gene3D" id="3.60.15.10">
    <property type="entry name" value="Ribonuclease Z/Hydroxyacylglutathione hydrolase-like"/>
    <property type="match status" value="1"/>
</dbReference>
<dbReference type="HAMAP" id="MF_01818">
    <property type="entry name" value="RNase_Z_BN"/>
    <property type="match status" value="1"/>
</dbReference>
<dbReference type="InterPro" id="IPR001279">
    <property type="entry name" value="Metallo-B-lactamas"/>
</dbReference>
<dbReference type="InterPro" id="IPR036866">
    <property type="entry name" value="RibonucZ/Hydroxyglut_hydro"/>
</dbReference>
<dbReference type="InterPro" id="IPR013471">
    <property type="entry name" value="RNase_Z/BN"/>
</dbReference>
<dbReference type="PANTHER" id="PTHR46018">
    <property type="entry name" value="ZINC PHOSPHODIESTERASE ELAC PROTEIN 1"/>
    <property type="match status" value="1"/>
</dbReference>
<dbReference type="PANTHER" id="PTHR46018:SF2">
    <property type="entry name" value="ZINC PHOSPHODIESTERASE ELAC PROTEIN 1"/>
    <property type="match status" value="1"/>
</dbReference>
<dbReference type="Pfam" id="PF12706">
    <property type="entry name" value="Lactamase_B_2"/>
    <property type="match status" value="1"/>
</dbReference>
<dbReference type="SUPFAM" id="SSF56281">
    <property type="entry name" value="Metallo-hydrolase/oxidoreductase"/>
    <property type="match status" value="1"/>
</dbReference>
<name>RNZ_PSEPK</name>
<keyword id="KW-0255">Endonuclease</keyword>
<keyword id="KW-0378">Hydrolase</keyword>
<keyword id="KW-0479">Metal-binding</keyword>
<keyword id="KW-0540">Nuclease</keyword>
<keyword id="KW-1185">Reference proteome</keyword>
<keyword id="KW-0819">tRNA processing</keyword>
<keyword id="KW-0862">Zinc</keyword>